<accession>B8JE34</accession>
<gene>
    <name evidence="1" type="primary">atpB</name>
    <name type="ordered locus">A2cp1_2762</name>
</gene>
<feature type="chain" id="PRO_1000132885" description="V-type ATP synthase beta chain">
    <location>
        <begin position="1"/>
        <end position="477"/>
    </location>
</feature>
<comment type="function">
    <text evidence="1">Produces ATP from ADP in the presence of a proton gradient across the membrane. The V-type beta chain is a regulatory subunit.</text>
</comment>
<comment type="similarity">
    <text evidence="1">Belongs to the ATPase alpha/beta chains family.</text>
</comment>
<protein>
    <recommendedName>
        <fullName evidence="1">V-type ATP synthase beta chain</fullName>
    </recommendedName>
    <alternativeName>
        <fullName evidence="1">V-ATPase subunit B</fullName>
    </alternativeName>
</protein>
<evidence type="ECO:0000255" key="1">
    <source>
        <dbReference type="HAMAP-Rule" id="MF_00310"/>
    </source>
</evidence>
<name>VATB_ANAD2</name>
<sequence>MDLVTRRIRGALGIAGPLLFLEGVPRARLGEVVRIRGEPEANGRAAEERSGQVIALSRDRIAVQVLEETRGLAPARAEVTLTGQVARLGVSRGMLGRVLDGLGRPADGLPPPVPEARPAIHGAALNVTRREKPSDFIETGVSAIDGMNTLVRGQKLPVFSCAGLPASRLAAQIVCQARVRGGEAFAVVFAAMGSPFREYHAFLEAFRAAGVLARTVVFLNRAEDPPIERLMTPRCALTCAEHLAFVHGLHVLVVLTDVTSYCEALREVALAREEVPGRRGYPGYMYTDLATIFERAGRVRGRPGSLTQLPVLTMPDDDLTHPIPDLTGYITEGQIVLSRDLDRRGVYPPIDVLPSLSRLMGLGAGPGKTRDDHRPVADQLYAFYARGRDVRRMAAIVGAASLGEEEKRLLAFADAFEDELVGQGGTFRTIEDTLEAGWRLLSGFPPAALTRIPERLLRARSARPAAGAAAVSGGAVA</sequence>
<dbReference type="EMBL" id="CP001359">
    <property type="protein sequence ID" value="ACL66099.1"/>
    <property type="molecule type" value="Genomic_DNA"/>
</dbReference>
<dbReference type="RefSeq" id="WP_012633860.1">
    <property type="nucleotide sequence ID" value="NC_011891.1"/>
</dbReference>
<dbReference type="SMR" id="B8JE34"/>
<dbReference type="KEGG" id="acp:A2cp1_2762"/>
<dbReference type="HOGENOM" id="CLU_022916_0_0_7"/>
<dbReference type="Proteomes" id="UP000007089">
    <property type="component" value="Chromosome"/>
</dbReference>
<dbReference type="GO" id="GO:0005524">
    <property type="term" value="F:ATP binding"/>
    <property type="evidence" value="ECO:0007669"/>
    <property type="project" value="UniProtKB-UniRule"/>
</dbReference>
<dbReference type="GO" id="GO:0046933">
    <property type="term" value="F:proton-transporting ATP synthase activity, rotational mechanism"/>
    <property type="evidence" value="ECO:0007669"/>
    <property type="project" value="UniProtKB-UniRule"/>
</dbReference>
<dbReference type="GO" id="GO:0042777">
    <property type="term" value="P:proton motive force-driven plasma membrane ATP synthesis"/>
    <property type="evidence" value="ECO:0007669"/>
    <property type="project" value="UniProtKB-UniRule"/>
</dbReference>
<dbReference type="CDD" id="cd18112">
    <property type="entry name" value="ATP-synt_V_A-type_beta_C"/>
    <property type="match status" value="1"/>
</dbReference>
<dbReference type="CDD" id="cd18118">
    <property type="entry name" value="ATP-synt_V_A-type_beta_N"/>
    <property type="match status" value="1"/>
</dbReference>
<dbReference type="CDD" id="cd01135">
    <property type="entry name" value="V_A-ATPase_B"/>
    <property type="match status" value="1"/>
</dbReference>
<dbReference type="Gene3D" id="3.40.50.12240">
    <property type="match status" value="1"/>
</dbReference>
<dbReference type="HAMAP" id="MF_00310">
    <property type="entry name" value="ATP_synth_B_arch"/>
    <property type="match status" value="1"/>
</dbReference>
<dbReference type="InterPro" id="IPR055190">
    <property type="entry name" value="ATP-synt_VA_C"/>
</dbReference>
<dbReference type="InterPro" id="IPR020003">
    <property type="entry name" value="ATPase_a/bsu_AS"/>
</dbReference>
<dbReference type="InterPro" id="IPR004100">
    <property type="entry name" value="ATPase_F1/V1/A1_a/bsu_N"/>
</dbReference>
<dbReference type="InterPro" id="IPR000194">
    <property type="entry name" value="ATPase_F1/V1/A1_a/bsu_nucl-bd"/>
</dbReference>
<dbReference type="InterPro" id="IPR027417">
    <property type="entry name" value="P-loop_NTPase"/>
</dbReference>
<dbReference type="InterPro" id="IPR022879">
    <property type="entry name" value="V-ATPase_su_B/beta"/>
</dbReference>
<dbReference type="NCBIfam" id="NF003235">
    <property type="entry name" value="PRK04196.1"/>
    <property type="match status" value="1"/>
</dbReference>
<dbReference type="PANTHER" id="PTHR43389">
    <property type="entry name" value="V-TYPE PROTON ATPASE SUBUNIT B"/>
    <property type="match status" value="1"/>
</dbReference>
<dbReference type="PANTHER" id="PTHR43389:SF4">
    <property type="entry name" value="V-TYPE PROTON ATPASE SUBUNIT B"/>
    <property type="match status" value="1"/>
</dbReference>
<dbReference type="Pfam" id="PF00006">
    <property type="entry name" value="ATP-synt_ab"/>
    <property type="match status" value="1"/>
</dbReference>
<dbReference type="Pfam" id="PF02874">
    <property type="entry name" value="ATP-synt_ab_N"/>
    <property type="match status" value="1"/>
</dbReference>
<dbReference type="Pfam" id="PF22919">
    <property type="entry name" value="ATP-synt_VA_C"/>
    <property type="match status" value="1"/>
</dbReference>
<dbReference type="SUPFAM" id="SSF47917">
    <property type="entry name" value="C-terminal domain of alpha and beta subunits of F1 ATP synthase"/>
    <property type="match status" value="1"/>
</dbReference>
<dbReference type="SUPFAM" id="SSF52540">
    <property type="entry name" value="P-loop containing nucleoside triphosphate hydrolases"/>
    <property type="match status" value="1"/>
</dbReference>
<dbReference type="PROSITE" id="PS00152">
    <property type="entry name" value="ATPASE_ALPHA_BETA"/>
    <property type="match status" value="1"/>
</dbReference>
<organism>
    <name type="scientific">Anaeromyxobacter dehalogenans (strain 2CP-1 / ATCC BAA-258)</name>
    <dbReference type="NCBI Taxonomy" id="455488"/>
    <lineage>
        <taxon>Bacteria</taxon>
        <taxon>Pseudomonadati</taxon>
        <taxon>Myxococcota</taxon>
        <taxon>Myxococcia</taxon>
        <taxon>Myxococcales</taxon>
        <taxon>Cystobacterineae</taxon>
        <taxon>Anaeromyxobacteraceae</taxon>
        <taxon>Anaeromyxobacter</taxon>
    </lineage>
</organism>
<proteinExistence type="inferred from homology"/>
<keyword id="KW-0066">ATP synthesis</keyword>
<keyword id="KW-0375">Hydrogen ion transport</keyword>
<keyword id="KW-0406">Ion transport</keyword>
<keyword id="KW-0813">Transport</keyword>
<reference key="1">
    <citation type="submission" date="2009-01" db="EMBL/GenBank/DDBJ databases">
        <title>Complete sequence of Anaeromyxobacter dehalogenans 2CP-1.</title>
        <authorList>
            <person name="Lucas S."/>
            <person name="Copeland A."/>
            <person name="Lapidus A."/>
            <person name="Glavina del Rio T."/>
            <person name="Dalin E."/>
            <person name="Tice H."/>
            <person name="Bruce D."/>
            <person name="Goodwin L."/>
            <person name="Pitluck S."/>
            <person name="Saunders E."/>
            <person name="Brettin T."/>
            <person name="Detter J.C."/>
            <person name="Han C."/>
            <person name="Larimer F."/>
            <person name="Land M."/>
            <person name="Hauser L."/>
            <person name="Kyrpides N."/>
            <person name="Ovchinnikova G."/>
            <person name="Beliaev A.S."/>
            <person name="Richardson P."/>
        </authorList>
    </citation>
    <scope>NUCLEOTIDE SEQUENCE [LARGE SCALE GENOMIC DNA]</scope>
    <source>
        <strain>2CP-1 / ATCC BAA-258</strain>
    </source>
</reference>